<reference key="1">
    <citation type="journal article" date="2004" name="Science">
        <title>The Ashbya gossypii genome as a tool for mapping the ancient Saccharomyces cerevisiae genome.</title>
        <authorList>
            <person name="Dietrich F.S."/>
            <person name="Voegeli S."/>
            <person name="Brachat S."/>
            <person name="Lerch A."/>
            <person name="Gates K."/>
            <person name="Steiner S."/>
            <person name="Mohr C."/>
            <person name="Poehlmann R."/>
            <person name="Luedi P."/>
            <person name="Choi S."/>
            <person name="Wing R.A."/>
            <person name="Flavier A."/>
            <person name="Gaffney T.D."/>
            <person name="Philippsen P."/>
        </authorList>
    </citation>
    <scope>NUCLEOTIDE SEQUENCE [LARGE SCALE GENOMIC DNA]</scope>
    <source>
        <strain>ATCC 10895 / CBS 109.51 / FGSC 9923 / NRRL Y-1056</strain>
    </source>
</reference>
<reference key="2">
    <citation type="journal article" date="2013" name="G3 (Bethesda)">
        <title>Genomes of Ashbya fungi isolated from insects reveal four mating-type loci, numerous translocations, lack of transposons, and distinct gene duplications.</title>
        <authorList>
            <person name="Dietrich F.S."/>
            <person name="Voegeli S."/>
            <person name="Kuo S."/>
            <person name="Philippsen P."/>
        </authorList>
    </citation>
    <scope>GENOME REANNOTATION</scope>
    <source>
        <strain>ATCC 10895 / CBS 109.51 / FGSC 9923 / NRRL Y-1056</strain>
    </source>
</reference>
<name>CUE1_EREGS</name>
<proteinExistence type="inferred from homology"/>
<feature type="chain" id="PRO_0000280669" description="Coupling of ubiquitin conjugation to ER degradation protein 1">
    <location>
        <begin position="1"/>
        <end position="184"/>
    </location>
</feature>
<feature type="topological domain" description="Lumenal" evidence="1">
    <location>
        <begin position="1"/>
        <end position="2"/>
    </location>
</feature>
<feature type="transmembrane region" description="Helical" evidence="2">
    <location>
        <begin position="3"/>
        <end position="23"/>
    </location>
</feature>
<feature type="topological domain" description="Cytoplasmic" evidence="1">
    <location>
        <begin position="24"/>
        <end position="184"/>
    </location>
</feature>
<feature type="domain" description="CUE" evidence="3">
    <location>
        <begin position="65"/>
        <end position="107"/>
    </location>
</feature>
<feature type="region of interest" description="Disordered" evidence="4">
    <location>
        <begin position="32"/>
        <end position="63"/>
    </location>
</feature>
<feature type="region of interest" description="Disordered" evidence="4">
    <location>
        <begin position="106"/>
        <end position="145"/>
    </location>
</feature>
<feature type="compositionally biased region" description="Polar residues" evidence="4">
    <location>
        <begin position="32"/>
        <end position="45"/>
    </location>
</feature>
<feature type="compositionally biased region" description="Pro residues" evidence="4">
    <location>
        <begin position="109"/>
        <end position="122"/>
    </location>
</feature>
<feature type="compositionally biased region" description="Basic and acidic residues" evidence="4">
    <location>
        <begin position="128"/>
        <end position="145"/>
    </location>
</feature>
<accession>Q756I2</accession>
<comment type="function">
    <text evidence="1">Component of the endoplasmic reticulum-associated protein degradation (ERAD) pathway. Recruits the soluble ubiquitin-conjugating enzyme UBC7 to the cytoplasmic face of the endoplasmic reticulum membrane where it functions in degradation of misfolded or regulated proteins localized in the endoplasmic reticulum (ER) lumen or membrane via the ubiquitin-proteasome system. Targets the E2 conjugating enzyme UBC7 to the DOA10 ubiquitin ligase complex, which is part of the ERAD-C pathway responsible for the rapid degradation of membrane proteins with misfolded cytoplasmic domains, and to the HRD1 ubiquitin ligase complex, which is part of the ERAD-L and ERAD-M pathways responsible for the rapid degradation of soluble lumenal and membrane proteins with misfolded lumenal domains (ERAD-L), or ER-membrane proteins with misfolded transmembrane domains (ERAD-M) (By similarity).</text>
</comment>
<comment type="subunit">
    <text evidence="1">Forms a heterodimer with UBC7.</text>
</comment>
<comment type="subcellular location">
    <subcellularLocation>
        <location evidence="1">Endoplasmic reticulum membrane</location>
        <topology evidence="1">Single-pass membrane protein</topology>
    </subcellularLocation>
</comment>
<comment type="similarity">
    <text evidence="5">Belongs to the CUE1 family.</text>
</comment>
<organism>
    <name type="scientific">Eremothecium gossypii (strain ATCC 10895 / CBS 109.51 / FGSC 9923 / NRRL Y-1056)</name>
    <name type="common">Yeast</name>
    <name type="synonym">Ashbya gossypii</name>
    <dbReference type="NCBI Taxonomy" id="284811"/>
    <lineage>
        <taxon>Eukaryota</taxon>
        <taxon>Fungi</taxon>
        <taxon>Dikarya</taxon>
        <taxon>Ascomycota</taxon>
        <taxon>Saccharomycotina</taxon>
        <taxon>Saccharomycetes</taxon>
        <taxon>Saccharomycetales</taxon>
        <taxon>Saccharomycetaceae</taxon>
        <taxon>Eremothecium</taxon>
    </lineage>
</organism>
<sequence length="184" mass="20791">MDQSSALFLALLLVLFVLVKWFIKTESHPSAQHATVDTGLSSQSTGAAGGRAQGTGAVRRRRRPVNDDMIEVVQALAPHLHSEQIRYDLERSGSVEATVERYLRGEDFPFPPGYTAPIPPESPQQDSSDPRKRSNIRADDLLQKYDVDPAEDMSAVEFHELDMDARKRFMVWRARKRMEANLQK</sequence>
<protein>
    <recommendedName>
        <fullName>Coupling of ubiquitin conjugation to ER degradation protein 1</fullName>
    </recommendedName>
</protein>
<keyword id="KW-0256">Endoplasmic reticulum</keyword>
<keyword id="KW-0472">Membrane</keyword>
<keyword id="KW-1185">Reference proteome</keyword>
<keyword id="KW-0812">Transmembrane</keyword>
<keyword id="KW-1133">Transmembrane helix</keyword>
<keyword id="KW-0833">Ubl conjugation pathway</keyword>
<evidence type="ECO:0000250" key="1"/>
<evidence type="ECO:0000255" key="2"/>
<evidence type="ECO:0000255" key="3">
    <source>
        <dbReference type="PROSITE-ProRule" id="PRU00468"/>
    </source>
</evidence>
<evidence type="ECO:0000256" key="4">
    <source>
        <dbReference type="SAM" id="MobiDB-lite"/>
    </source>
</evidence>
<evidence type="ECO:0000305" key="5"/>
<gene>
    <name type="primary">CUE1</name>
    <name type="ordered locus">AER279W</name>
</gene>
<dbReference type="EMBL" id="AE016818">
    <property type="protein sequence ID" value="AAS52960.1"/>
    <property type="molecule type" value="Genomic_DNA"/>
</dbReference>
<dbReference type="RefSeq" id="NP_985136.1">
    <property type="nucleotide sequence ID" value="NM_210490.1"/>
</dbReference>
<dbReference type="SMR" id="Q756I2"/>
<dbReference type="FunCoup" id="Q756I2">
    <property type="interactions" value="111"/>
</dbReference>
<dbReference type="STRING" id="284811.Q756I2"/>
<dbReference type="EnsemblFungi" id="AAS52960">
    <property type="protein sequence ID" value="AAS52960"/>
    <property type="gene ID" value="AGOS_AER279W"/>
</dbReference>
<dbReference type="GeneID" id="4621347"/>
<dbReference type="KEGG" id="ago:AGOS_AER279W"/>
<dbReference type="eggNOG" id="ENOG502S35Z">
    <property type="taxonomic scope" value="Eukaryota"/>
</dbReference>
<dbReference type="HOGENOM" id="CLU_115919_0_0_1"/>
<dbReference type="InParanoid" id="Q756I2"/>
<dbReference type="OMA" id="TVNRFME"/>
<dbReference type="OrthoDB" id="3824970at2759"/>
<dbReference type="Proteomes" id="UP000000591">
    <property type="component" value="Chromosome V"/>
</dbReference>
<dbReference type="GO" id="GO:1990389">
    <property type="term" value="C:CUE1-UBC7 ubiquitin-conjugating enzyme complex"/>
    <property type="evidence" value="ECO:0007669"/>
    <property type="project" value="EnsemblFungi"/>
</dbReference>
<dbReference type="GO" id="GO:0000837">
    <property type="term" value="C:Doa10p ubiquitin ligase complex"/>
    <property type="evidence" value="ECO:0007669"/>
    <property type="project" value="EnsemblFungi"/>
</dbReference>
<dbReference type="GO" id="GO:0000839">
    <property type="term" value="C:Hrd1p ubiquitin ligase ERAD-L complex"/>
    <property type="evidence" value="ECO:0007669"/>
    <property type="project" value="EnsemblFungi"/>
</dbReference>
<dbReference type="GO" id="GO:0043130">
    <property type="term" value="F:ubiquitin binding"/>
    <property type="evidence" value="ECO:0007669"/>
    <property type="project" value="EnsemblFungi"/>
</dbReference>
<dbReference type="GO" id="GO:0097027">
    <property type="term" value="F:ubiquitin-protein transferase activator activity"/>
    <property type="evidence" value="ECO:0007669"/>
    <property type="project" value="EnsemblFungi"/>
</dbReference>
<dbReference type="GO" id="GO:0036503">
    <property type="term" value="P:ERAD pathway"/>
    <property type="evidence" value="ECO:0007669"/>
    <property type="project" value="EnsemblFungi"/>
</dbReference>
<dbReference type="GO" id="GO:0097051">
    <property type="term" value="P:establishment of protein localization to endoplasmic reticulum membrane"/>
    <property type="evidence" value="ECO:0007669"/>
    <property type="project" value="EnsemblFungi"/>
</dbReference>
<dbReference type="CDD" id="cd14424">
    <property type="entry name" value="CUE_Cue1p_like"/>
    <property type="match status" value="1"/>
</dbReference>
<dbReference type="FunFam" id="1.10.8.10:FF:000050">
    <property type="entry name" value="Related to AMFR protein"/>
    <property type="match status" value="1"/>
</dbReference>
<dbReference type="Gene3D" id="1.10.287.4310">
    <property type="match status" value="1"/>
</dbReference>
<dbReference type="Gene3D" id="1.10.8.10">
    <property type="entry name" value="DNA helicase RuvA subunit, C-terminal domain"/>
    <property type="match status" value="1"/>
</dbReference>
<dbReference type="InterPro" id="IPR003892">
    <property type="entry name" value="CUE"/>
</dbReference>
<dbReference type="InterPro" id="IPR041158">
    <property type="entry name" value="Cue1_U7BR"/>
</dbReference>
<dbReference type="Pfam" id="PF02845">
    <property type="entry name" value="CUE"/>
    <property type="match status" value="1"/>
</dbReference>
<dbReference type="Pfam" id="PF18499">
    <property type="entry name" value="Cue1_U7BR"/>
    <property type="match status" value="1"/>
</dbReference>
<dbReference type="SMART" id="SM00546">
    <property type="entry name" value="CUE"/>
    <property type="match status" value="1"/>
</dbReference>
<dbReference type="PROSITE" id="PS51140">
    <property type="entry name" value="CUE"/>
    <property type="match status" value="1"/>
</dbReference>